<organism>
    <name type="scientific">Arabidopsis thaliana</name>
    <name type="common">Mouse-ear cress</name>
    <dbReference type="NCBI Taxonomy" id="3702"/>
    <lineage>
        <taxon>Eukaryota</taxon>
        <taxon>Viridiplantae</taxon>
        <taxon>Streptophyta</taxon>
        <taxon>Embryophyta</taxon>
        <taxon>Tracheophyta</taxon>
        <taxon>Spermatophyta</taxon>
        <taxon>Magnoliopsida</taxon>
        <taxon>eudicotyledons</taxon>
        <taxon>Gunneridae</taxon>
        <taxon>Pentapetalae</taxon>
        <taxon>rosids</taxon>
        <taxon>malvids</taxon>
        <taxon>Brassicales</taxon>
        <taxon>Brassicaceae</taxon>
        <taxon>Camelineae</taxon>
        <taxon>Arabidopsis</taxon>
    </lineage>
</organism>
<protein>
    <recommendedName>
        <fullName evidence="1">Small ribosomal subunit protein uS2c</fullName>
    </recommendedName>
    <alternativeName>
        <fullName>30S ribosomal protein S2, chloroplastic</fullName>
    </alternativeName>
</protein>
<dbReference type="EMBL" id="AP000423">
    <property type="protein sequence ID" value="BAA84374.1"/>
    <property type="molecule type" value="Genomic_DNA"/>
</dbReference>
<dbReference type="RefSeq" id="NP_051048.1">
    <property type="nucleotide sequence ID" value="NC_000932.1"/>
</dbReference>
<dbReference type="SMR" id="P56797"/>
<dbReference type="BioGRID" id="29980">
    <property type="interactions" value="14"/>
</dbReference>
<dbReference type="FunCoup" id="P56797">
    <property type="interactions" value="654"/>
</dbReference>
<dbReference type="STRING" id="3702.P56797"/>
<dbReference type="PaxDb" id="3702-ATCG00160.1"/>
<dbReference type="ProteomicsDB" id="228241"/>
<dbReference type="EnsemblPlants" id="ATCG00160.1">
    <property type="protein sequence ID" value="ATCG00160.1"/>
    <property type="gene ID" value="ATCG00160"/>
</dbReference>
<dbReference type="GeneID" id="844786"/>
<dbReference type="Gramene" id="ATCG00160.1">
    <property type="protein sequence ID" value="ATCG00160.1"/>
    <property type="gene ID" value="ATCG00160"/>
</dbReference>
<dbReference type="KEGG" id="ath:ArthCp011"/>
<dbReference type="Araport" id="ATCG00160"/>
<dbReference type="TAIR" id="ATCG00160">
    <property type="gene designation" value="RPS2"/>
</dbReference>
<dbReference type="eggNOG" id="KOG0832">
    <property type="taxonomic scope" value="Eukaryota"/>
</dbReference>
<dbReference type="HOGENOM" id="CLU_040318_1_4_1"/>
<dbReference type="InParanoid" id="P56797"/>
<dbReference type="OMA" id="PYIFMEK"/>
<dbReference type="PRO" id="PR:P56797"/>
<dbReference type="Proteomes" id="UP000006548">
    <property type="component" value="Chloroplast Pltd"/>
</dbReference>
<dbReference type="ExpressionAtlas" id="P56797">
    <property type="expression patterns" value="baseline and differential"/>
</dbReference>
<dbReference type="GO" id="GO:0009507">
    <property type="term" value="C:chloroplast"/>
    <property type="evidence" value="ECO:0007005"/>
    <property type="project" value="TAIR"/>
</dbReference>
<dbReference type="GO" id="GO:0009570">
    <property type="term" value="C:chloroplast stroma"/>
    <property type="evidence" value="ECO:0007005"/>
    <property type="project" value="TAIR"/>
</dbReference>
<dbReference type="GO" id="GO:0009536">
    <property type="term" value="C:plastid"/>
    <property type="evidence" value="ECO:0007005"/>
    <property type="project" value="TAIR"/>
</dbReference>
<dbReference type="GO" id="GO:0015935">
    <property type="term" value="C:small ribosomal subunit"/>
    <property type="evidence" value="ECO:0007669"/>
    <property type="project" value="InterPro"/>
</dbReference>
<dbReference type="GO" id="GO:0003729">
    <property type="term" value="F:mRNA binding"/>
    <property type="evidence" value="ECO:0000314"/>
    <property type="project" value="TAIR"/>
</dbReference>
<dbReference type="GO" id="GO:0003735">
    <property type="term" value="F:structural constituent of ribosome"/>
    <property type="evidence" value="ECO:0007669"/>
    <property type="project" value="InterPro"/>
</dbReference>
<dbReference type="GO" id="GO:0006412">
    <property type="term" value="P:translation"/>
    <property type="evidence" value="ECO:0007669"/>
    <property type="project" value="UniProtKB-UniRule"/>
</dbReference>
<dbReference type="CDD" id="cd01425">
    <property type="entry name" value="RPS2"/>
    <property type="match status" value="1"/>
</dbReference>
<dbReference type="FunFam" id="3.40.50.10490:FF:000101">
    <property type="match status" value="1"/>
</dbReference>
<dbReference type="FunFam" id="1.10.287.610:FF:000001">
    <property type="entry name" value="30S ribosomal protein S2"/>
    <property type="match status" value="1"/>
</dbReference>
<dbReference type="Gene3D" id="3.40.50.10490">
    <property type="entry name" value="Glucose-6-phosphate isomerase like protein, domain 1"/>
    <property type="match status" value="1"/>
</dbReference>
<dbReference type="Gene3D" id="1.10.287.610">
    <property type="entry name" value="Helix hairpin bin"/>
    <property type="match status" value="1"/>
</dbReference>
<dbReference type="HAMAP" id="MF_00291_B">
    <property type="entry name" value="Ribosomal_uS2_B"/>
    <property type="match status" value="1"/>
</dbReference>
<dbReference type="InterPro" id="IPR001865">
    <property type="entry name" value="Ribosomal_uS2"/>
</dbReference>
<dbReference type="InterPro" id="IPR005706">
    <property type="entry name" value="Ribosomal_uS2_bac/mit/plastid"/>
</dbReference>
<dbReference type="InterPro" id="IPR018130">
    <property type="entry name" value="Ribosomal_uS2_CS"/>
</dbReference>
<dbReference type="InterPro" id="IPR023591">
    <property type="entry name" value="Ribosomal_uS2_flav_dom_sf"/>
</dbReference>
<dbReference type="NCBIfam" id="TIGR01011">
    <property type="entry name" value="rpsB_bact"/>
    <property type="match status" value="1"/>
</dbReference>
<dbReference type="PANTHER" id="PTHR12534">
    <property type="entry name" value="30S RIBOSOMAL PROTEIN S2 PROKARYOTIC AND ORGANELLAR"/>
    <property type="match status" value="1"/>
</dbReference>
<dbReference type="PANTHER" id="PTHR12534:SF0">
    <property type="entry name" value="SMALL RIBOSOMAL SUBUNIT PROTEIN US2M"/>
    <property type="match status" value="1"/>
</dbReference>
<dbReference type="Pfam" id="PF00318">
    <property type="entry name" value="Ribosomal_S2"/>
    <property type="match status" value="1"/>
</dbReference>
<dbReference type="PRINTS" id="PR00395">
    <property type="entry name" value="RIBOSOMALS2"/>
</dbReference>
<dbReference type="SUPFAM" id="SSF52313">
    <property type="entry name" value="Ribosomal protein S2"/>
    <property type="match status" value="1"/>
</dbReference>
<dbReference type="PROSITE" id="PS00962">
    <property type="entry name" value="RIBOSOMAL_S2_1"/>
    <property type="match status" value="1"/>
</dbReference>
<dbReference type="PROSITE" id="PS00963">
    <property type="entry name" value="RIBOSOMAL_S2_2"/>
    <property type="match status" value="1"/>
</dbReference>
<accession>P56797</accession>
<geneLocation type="chloroplast"/>
<proteinExistence type="inferred from homology"/>
<keyword id="KW-0150">Chloroplast</keyword>
<keyword id="KW-0934">Plastid</keyword>
<keyword id="KW-1185">Reference proteome</keyword>
<keyword id="KW-0687">Ribonucleoprotein</keyword>
<keyword id="KW-0689">Ribosomal protein</keyword>
<comment type="subcellular location">
    <subcellularLocation>
        <location>Plastid</location>
        <location>Chloroplast</location>
    </subcellularLocation>
</comment>
<comment type="similarity">
    <text evidence="2">Belongs to the universal ribosomal protein uS2 family.</text>
</comment>
<sequence>MTKRYWNIDLEEMMRAGVHFGHGTRKWNPRMAPYISAKRKGIHIINLTRTARFLSEACDLVFDAASRGKQFLIVGTKNKAADLVSRAAIRARCHYVNKKWLGGMLTNWSTTEKRLHKFRDLRTEQKTEGFNRLPKRDAAVLKRQLSRLETYLGGIKYMTGLPDIVIILDQQEEYTALRECITLGIPTISLIDTNCNPDLADISIPANDDAIASIRFILNKLVFAICEGRSSYIQNS</sequence>
<name>RR2_ARATH</name>
<feature type="chain" id="PRO_0000134288" description="Small ribosomal subunit protein uS2c">
    <location>
        <begin position="1"/>
        <end position="236"/>
    </location>
</feature>
<reference key="1">
    <citation type="journal article" date="1999" name="DNA Res.">
        <title>Complete structure of the chloroplast genome of Arabidopsis thaliana.</title>
        <authorList>
            <person name="Sato S."/>
            <person name="Nakamura Y."/>
            <person name="Kaneko T."/>
            <person name="Asamizu E."/>
            <person name="Tabata S."/>
        </authorList>
    </citation>
    <scope>NUCLEOTIDE SEQUENCE [LARGE SCALE GENOMIC DNA]</scope>
    <source>
        <strain>cv. Columbia</strain>
    </source>
</reference>
<reference key="2">
    <citation type="journal article" date="2023" name="Plant Cell">
        <title>An updated nomenclature for plant ribosomal protein genes.</title>
        <authorList>
            <person name="Scarpin M.R."/>
            <person name="Busche M."/>
            <person name="Martinez R.E."/>
            <person name="Harper L.C."/>
            <person name="Reiser L."/>
            <person name="Szakonyi D."/>
            <person name="Merchante C."/>
            <person name="Lan T."/>
            <person name="Xiong W."/>
            <person name="Mo B."/>
            <person name="Tang G."/>
            <person name="Chen X."/>
            <person name="Bailey-Serres J."/>
            <person name="Browning K.S."/>
            <person name="Brunkard J.O."/>
        </authorList>
    </citation>
    <scope>NOMENCLATURE</scope>
</reference>
<evidence type="ECO:0000303" key="1">
    <source>
    </source>
</evidence>
<evidence type="ECO:0000305" key="2"/>
<gene>
    <name type="primary">rps2</name>
    <name type="ordered locus">AtCg00160</name>
</gene>